<keyword id="KW-0520">NAD</keyword>
<keyword id="KW-0560">Oxidoreductase</keyword>
<keyword id="KW-1185">Reference proteome</keyword>
<keyword id="KW-0816">Tricarboxylic acid cycle</keyword>
<proteinExistence type="inferred from homology"/>
<accession>Q4FP28</accession>
<reference key="1">
    <citation type="journal article" date="2005" name="Science">
        <title>Genome streamlining in a cosmopolitan oceanic bacterium.</title>
        <authorList>
            <person name="Giovannoni S.J."/>
            <person name="Tripp H.J."/>
            <person name="Givan S."/>
            <person name="Podar M."/>
            <person name="Vergin K.L."/>
            <person name="Baptista D."/>
            <person name="Bibbs L."/>
            <person name="Eads J."/>
            <person name="Richardson T.H."/>
            <person name="Noordewier M."/>
            <person name="Rappe M.S."/>
            <person name="Short J.M."/>
            <person name="Carrington J.C."/>
            <person name="Mathur E.J."/>
        </authorList>
    </citation>
    <scope>NUCLEOTIDE SEQUENCE [LARGE SCALE GENOMIC DNA]</scope>
    <source>
        <strain>HTCC1062</strain>
    </source>
</reference>
<evidence type="ECO:0000255" key="1">
    <source>
        <dbReference type="HAMAP-Rule" id="MF_00487"/>
    </source>
</evidence>
<dbReference type="EC" id="1.1.1.37" evidence="1"/>
<dbReference type="EMBL" id="CP000084">
    <property type="protein sequence ID" value="AAZ21061.1"/>
    <property type="molecule type" value="Genomic_DNA"/>
</dbReference>
<dbReference type="RefSeq" id="WP_011281563.1">
    <property type="nucleotide sequence ID" value="NC_007205.1"/>
</dbReference>
<dbReference type="SMR" id="Q4FP28"/>
<dbReference type="STRING" id="335992.SAR11_0240"/>
<dbReference type="GeneID" id="66294737"/>
<dbReference type="KEGG" id="pub:SAR11_0240"/>
<dbReference type="eggNOG" id="COG0039">
    <property type="taxonomic scope" value="Bacteria"/>
</dbReference>
<dbReference type="HOGENOM" id="CLU_045401_2_1_5"/>
<dbReference type="OrthoDB" id="9802969at2"/>
<dbReference type="Proteomes" id="UP000002528">
    <property type="component" value="Chromosome"/>
</dbReference>
<dbReference type="GO" id="GO:0004459">
    <property type="term" value="F:L-lactate dehydrogenase activity"/>
    <property type="evidence" value="ECO:0007669"/>
    <property type="project" value="TreeGrafter"/>
</dbReference>
<dbReference type="GO" id="GO:0030060">
    <property type="term" value="F:L-malate dehydrogenase (NAD+) activity"/>
    <property type="evidence" value="ECO:0007669"/>
    <property type="project" value="UniProtKB-UniRule"/>
</dbReference>
<dbReference type="GO" id="GO:0006089">
    <property type="term" value="P:lactate metabolic process"/>
    <property type="evidence" value="ECO:0007669"/>
    <property type="project" value="TreeGrafter"/>
</dbReference>
<dbReference type="GO" id="GO:0006099">
    <property type="term" value="P:tricarboxylic acid cycle"/>
    <property type="evidence" value="ECO:0007669"/>
    <property type="project" value="UniProtKB-UniRule"/>
</dbReference>
<dbReference type="CDD" id="cd01339">
    <property type="entry name" value="LDH-like_MDH"/>
    <property type="match status" value="1"/>
</dbReference>
<dbReference type="FunFam" id="3.40.50.720:FF:000018">
    <property type="entry name" value="Malate dehydrogenase"/>
    <property type="match status" value="1"/>
</dbReference>
<dbReference type="FunFam" id="3.90.110.10:FF:000004">
    <property type="entry name" value="Malate dehydrogenase"/>
    <property type="match status" value="1"/>
</dbReference>
<dbReference type="Gene3D" id="3.90.110.10">
    <property type="entry name" value="Lactate dehydrogenase/glycoside hydrolase, family 4, C-terminal"/>
    <property type="match status" value="1"/>
</dbReference>
<dbReference type="Gene3D" id="3.40.50.720">
    <property type="entry name" value="NAD(P)-binding Rossmann-like Domain"/>
    <property type="match status" value="1"/>
</dbReference>
<dbReference type="HAMAP" id="MF_00487">
    <property type="entry name" value="Malate_dehydrog_3"/>
    <property type="match status" value="1"/>
</dbReference>
<dbReference type="InterPro" id="IPR001557">
    <property type="entry name" value="L-lactate/malate_DH"/>
</dbReference>
<dbReference type="InterPro" id="IPR022383">
    <property type="entry name" value="Lactate/malate_DH_C"/>
</dbReference>
<dbReference type="InterPro" id="IPR001236">
    <property type="entry name" value="Lactate/malate_DH_N"/>
</dbReference>
<dbReference type="InterPro" id="IPR015955">
    <property type="entry name" value="Lactate_DH/Glyco_Ohase_4_C"/>
</dbReference>
<dbReference type="InterPro" id="IPR011275">
    <property type="entry name" value="Malate_DH_type3"/>
</dbReference>
<dbReference type="InterPro" id="IPR036291">
    <property type="entry name" value="NAD(P)-bd_dom_sf"/>
</dbReference>
<dbReference type="NCBIfam" id="TIGR01763">
    <property type="entry name" value="MalateDH_bact"/>
    <property type="match status" value="1"/>
</dbReference>
<dbReference type="NCBIfam" id="NF004863">
    <property type="entry name" value="PRK06223.1"/>
    <property type="match status" value="1"/>
</dbReference>
<dbReference type="PANTHER" id="PTHR43128">
    <property type="entry name" value="L-2-HYDROXYCARBOXYLATE DEHYDROGENASE (NAD(P)(+))"/>
    <property type="match status" value="1"/>
</dbReference>
<dbReference type="PANTHER" id="PTHR43128:SF16">
    <property type="entry name" value="L-LACTATE DEHYDROGENASE"/>
    <property type="match status" value="1"/>
</dbReference>
<dbReference type="Pfam" id="PF02866">
    <property type="entry name" value="Ldh_1_C"/>
    <property type="match status" value="1"/>
</dbReference>
<dbReference type="Pfam" id="PF00056">
    <property type="entry name" value="Ldh_1_N"/>
    <property type="match status" value="1"/>
</dbReference>
<dbReference type="PIRSF" id="PIRSF000102">
    <property type="entry name" value="Lac_mal_DH"/>
    <property type="match status" value="1"/>
</dbReference>
<dbReference type="PRINTS" id="PR00086">
    <property type="entry name" value="LLDHDRGNASE"/>
</dbReference>
<dbReference type="SUPFAM" id="SSF56327">
    <property type="entry name" value="LDH C-terminal domain-like"/>
    <property type="match status" value="1"/>
</dbReference>
<dbReference type="SUPFAM" id="SSF51735">
    <property type="entry name" value="NAD(P)-binding Rossmann-fold domains"/>
    <property type="match status" value="1"/>
</dbReference>
<feature type="chain" id="PRO_0000241957" description="Malate dehydrogenase">
    <location>
        <begin position="1"/>
        <end position="320"/>
    </location>
</feature>
<feature type="active site" description="Proton acceptor" evidence="1">
    <location>
        <position position="175"/>
    </location>
</feature>
<feature type="binding site" evidence="1">
    <location>
        <begin position="8"/>
        <end position="13"/>
    </location>
    <ligand>
        <name>NAD(+)</name>
        <dbReference type="ChEBI" id="CHEBI:57540"/>
    </ligand>
</feature>
<feature type="binding site" evidence="1">
    <location>
        <position position="33"/>
    </location>
    <ligand>
        <name>NAD(+)</name>
        <dbReference type="ChEBI" id="CHEBI:57540"/>
    </ligand>
</feature>
<feature type="binding site" evidence="1">
    <location>
        <position position="82"/>
    </location>
    <ligand>
        <name>substrate</name>
    </ligand>
</feature>
<feature type="binding site" evidence="1">
    <location>
        <position position="88"/>
    </location>
    <ligand>
        <name>substrate</name>
    </ligand>
</feature>
<feature type="binding site" evidence="1">
    <location>
        <position position="95"/>
    </location>
    <ligand>
        <name>NAD(+)</name>
        <dbReference type="ChEBI" id="CHEBI:57540"/>
    </ligand>
</feature>
<feature type="binding site" evidence="1">
    <location>
        <begin position="118"/>
        <end position="120"/>
    </location>
    <ligand>
        <name>NAD(+)</name>
        <dbReference type="ChEBI" id="CHEBI:57540"/>
    </ligand>
</feature>
<feature type="binding site" evidence="1">
    <location>
        <position position="120"/>
    </location>
    <ligand>
        <name>substrate</name>
    </ligand>
</feature>
<feature type="binding site" evidence="1">
    <location>
        <position position="151"/>
    </location>
    <ligand>
        <name>substrate</name>
    </ligand>
</feature>
<sequence length="320" mass="34427">MKKISLIGAGQIGGTLAHLIGTKEVADEVVLFDVASGIAKGKALDIAQSSSVDGFNVKFSGTDNYEDIKDSDVIIITAGVPRKPGMSRDDLLGINLKIIKQVAEGIKKNAPNAFVICITNPLDVMVMAFQKFSGLPANKVVGMAGILDSSRFKLFLSLELNVPVKEIEAMVMGGHGDTMVPLPRFTKVSGKPLLDLVKEGKISPERLEEINQRTRDGGAEIVKYLEKGSAFYAPAASGVQMAEAYLKDEKKLLPCAVHLNGEYGVSNVYAGVPVIIGKDGVEKIEQIDLDEKEKKEFMHSIDAVKALWEAASKIDPDLSK</sequence>
<gene>
    <name evidence="1" type="primary">mdh</name>
    <name type="ordered locus">SAR11_0240</name>
</gene>
<organism>
    <name type="scientific">Pelagibacter ubique (strain HTCC1062)</name>
    <dbReference type="NCBI Taxonomy" id="335992"/>
    <lineage>
        <taxon>Bacteria</taxon>
        <taxon>Pseudomonadati</taxon>
        <taxon>Pseudomonadota</taxon>
        <taxon>Alphaproteobacteria</taxon>
        <taxon>Candidatus Pelagibacterales</taxon>
        <taxon>Candidatus Pelagibacteraceae</taxon>
        <taxon>Candidatus Pelagibacter</taxon>
    </lineage>
</organism>
<comment type="function">
    <text evidence="1">Catalyzes the reversible oxidation of malate to oxaloacetate.</text>
</comment>
<comment type="catalytic activity">
    <reaction evidence="1">
        <text>(S)-malate + NAD(+) = oxaloacetate + NADH + H(+)</text>
        <dbReference type="Rhea" id="RHEA:21432"/>
        <dbReference type="ChEBI" id="CHEBI:15378"/>
        <dbReference type="ChEBI" id="CHEBI:15589"/>
        <dbReference type="ChEBI" id="CHEBI:16452"/>
        <dbReference type="ChEBI" id="CHEBI:57540"/>
        <dbReference type="ChEBI" id="CHEBI:57945"/>
        <dbReference type="EC" id="1.1.1.37"/>
    </reaction>
</comment>
<comment type="similarity">
    <text evidence="1">Belongs to the LDH/MDH superfamily. MDH type 3 family.</text>
</comment>
<name>MDH_PELUB</name>
<protein>
    <recommendedName>
        <fullName evidence="1">Malate dehydrogenase</fullName>
        <ecNumber evidence="1">1.1.1.37</ecNumber>
    </recommendedName>
</protein>